<proteinExistence type="evidence at transcript level"/>
<feature type="chain" id="PRO_0000322983" description="Protein TMED8">
    <location>
        <begin position="1"/>
        <end position="326"/>
    </location>
</feature>
<feature type="domain" description="GOLD" evidence="2">
    <location>
        <begin position="160"/>
        <end position="324"/>
    </location>
</feature>
<feature type="region of interest" description="Disordered" evidence="3">
    <location>
        <begin position="1"/>
        <end position="99"/>
    </location>
</feature>
<feature type="region of interest" description="Disordered" evidence="3">
    <location>
        <begin position="234"/>
        <end position="268"/>
    </location>
</feature>
<feature type="compositionally biased region" description="Low complexity" evidence="3">
    <location>
        <begin position="50"/>
        <end position="65"/>
    </location>
</feature>
<feature type="compositionally biased region" description="Acidic residues" evidence="3">
    <location>
        <begin position="239"/>
        <end position="255"/>
    </location>
</feature>
<feature type="modified residue" description="N6-acetyllysine" evidence="1">
    <location>
        <position position="170"/>
    </location>
</feature>
<sequence length="326" mass="35785">MSDRQAAEGPAFWSPAARRGSAGGVGDRRGVEESQAAASEKEDLESTNVSSPLASASDPAAESSPYRPQMVSPASKDTTEDLQNVAGASEGQAPGEQAALPAGQTQVLSEMAKYQAPQRPEDTVMIQSEHTGAIDVLSADLESADLLGDHRKVSPPLMAPPCVWTFAKVKEFKSKLGKEKNSRLVVKRGEVVTIRVPTHPEGKRVCWEFATDDYDIGFGVYFDWTPVTSTDITVQVSDSSEDEEEEEDEEEEIEEPVPVGDVERGSRSSLRGRYGEVMPVYRRDSHRDVQAGSHDYPGEGIYLLKFDNSYSLLRNKTLYFHIYYTS</sequence>
<protein>
    <recommendedName>
        <fullName>Protein TMED8</fullName>
    </recommendedName>
</protein>
<reference key="1">
    <citation type="journal article" date="2005" name="Science">
        <title>The transcriptional landscape of the mammalian genome.</title>
        <authorList>
            <person name="Carninci P."/>
            <person name="Kasukawa T."/>
            <person name="Katayama S."/>
            <person name="Gough J."/>
            <person name="Frith M.C."/>
            <person name="Maeda N."/>
            <person name="Oyama R."/>
            <person name="Ravasi T."/>
            <person name="Lenhard B."/>
            <person name="Wells C."/>
            <person name="Kodzius R."/>
            <person name="Shimokawa K."/>
            <person name="Bajic V.B."/>
            <person name="Brenner S.E."/>
            <person name="Batalov S."/>
            <person name="Forrest A.R."/>
            <person name="Zavolan M."/>
            <person name="Davis M.J."/>
            <person name="Wilming L.G."/>
            <person name="Aidinis V."/>
            <person name="Allen J.E."/>
            <person name="Ambesi-Impiombato A."/>
            <person name="Apweiler R."/>
            <person name="Aturaliya R.N."/>
            <person name="Bailey T.L."/>
            <person name="Bansal M."/>
            <person name="Baxter L."/>
            <person name="Beisel K.W."/>
            <person name="Bersano T."/>
            <person name="Bono H."/>
            <person name="Chalk A.M."/>
            <person name="Chiu K.P."/>
            <person name="Choudhary V."/>
            <person name="Christoffels A."/>
            <person name="Clutterbuck D.R."/>
            <person name="Crowe M.L."/>
            <person name="Dalla E."/>
            <person name="Dalrymple B.P."/>
            <person name="de Bono B."/>
            <person name="Della Gatta G."/>
            <person name="di Bernardo D."/>
            <person name="Down T."/>
            <person name="Engstrom P."/>
            <person name="Fagiolini M."/>
            <person name="Faulkner G."/>
            <person name="Fletcher C.F."/>
            <person name="Fukushima T."/>
            <person name="Furuno M."/>
            <person name="Futaki S."/>
            <person name="Gariboldi M."/>
            <person name="Georgii-Hemming P."/>
            <person name="Gingeras T.R."/>
            <person name="Gojobori T."/>
            <person name="Green R.E."/>
            <person name="Gustincich S."/>
            <person name="Harbers M."/>
            <person name="Hayashi Y."/>
            <person name="Hensch T.K."/>
            <person name="Hirokawa N."/>
            <person name="Hill D."/>
            <person name="Huminiecki L."/>
            <person name="Iacono M."/>
            <person name="Ikeo K."/>
            <person name="Iwama A."/>
            <person name="Ishikawa T."/>
            <person name="Jakt M."/>
            <person name="Kanapin A."/>
            <person name="Katoh M."/>
            <person name="Kawasawa Y."/>
            <person name="Kelso J."/>
            <person name="Kitamura H."/>
            <person name="Kitano H."/>
            <person name="Kollias G."/>
            <person name="Krishnan S.P."/>
            <person name="Kruger A."/>
            <person name="Kummerfeld S.K."/>
            <person name="Kurochkin I.V."/>
            <person name="Lareau L.F."/>
            <person name="Lazarevic D."/>
            <person name="Lipovich L."/>
            <person name="Liu J."/>
            <person name="Liuni S."/>
            <person name="McWilliam S."/>
            <person name="Madan Babu M."/>
            <person name="Madera M."/>
            <person name="Marchionni L."/>
            <person name="Matsuda H."/>
            <person name="Matsuzawa S."/>
            <person name="Miki H."/>
            <person name="Mignone F."/>
            <person name="Miyake S."/>
            <person name="Morris K."/>
            <person name="Mottagui-Tabar S."/>
            <person name="Mulder N."/>
            <person name="Nakano N."/>
            <person name="Nakauchi H."/>
            <person name="Ng P."/>
            <person name="Nilsson R."/>
            <person name="Nishiguchi S."/>
            <person name="Nishikawa S."/>
            <person name="Nori F."/>
            <person name="Ohara O."/>
            <person name="Okazaki Y."/>
            <person name="Orlando V."/>
            <person name="Pang K.C."/>
            <person name="Pavan W.J."/>
            <person name="Pavesi G."/>
            <person name="Pesole G."/>
            <person name="Petrovsky N."/>
            <person name="Piazza S."/>
            <person name="Reed J."/>
            <person name="Reid J.F."/>
            <person name="Ring B.Z."/>
            <person name="Ringwald M."/>
            <person name="Rost B."/>
            <person name="Ruan Y."/>
            <person name="Salzberg S.L."/>
            <person name="Sandelin A."/>
            <person name="Schneider C."/>
            <person name="Schoenbach C."/>
            <person name="Sekiguchi K."/>
            <person name="Semple C.A."/>
            <person name="Seno S."/>
            <person name="Sessa L."/>
            <person name="Sheng Y."/>
            <person name="Shibata Y."/>
            <person name="Shimada H."/>
            <person name="Shimada K."/>
            <person name="Silva D."/>
            <person name="Sinclair B."/>
            <person name="Sperling S."/>
            <person name="Stupka E."/>
            <person name="Sugiura K."/>
            <person name="Sultana R."/>
            <person name="Takenaka Y."/>
            <person name="Taki K."/>
            <person name="Tammoja K."/>
            <person name="Tan S.L."/>
            <person name="Tang S."/>
            <person name="Taylor M.S."/>
            <person name="Tegner J."/>
            <person name="Teichmann S.A."/>
            <person name="Ueda H.R."/>
            <person name="van Nimwegen E."/>
            <person name="Verardo R."/>
            <person name="Wei C.L."/>
            <person name="Yagi K."/>
            <person name="Yamanishi H."/>
            <person name="Zabarovsky E."/>
            <person name="Zhu S."/>
            <person name="Zimmer A."/>
            <person name="Hide W."/>
            <person name="Bult C."/>
            <person name="Grimmond S.M."/>
            <person name="Teasdale R.D."/>
            <person name="Liu E.T."/>
            <person name="Brusic V."/>
            <person name="Quackenbush J."/>
            <person name="Wahlestedt C."/>
            <person name="Mattick J.S."/>
            <person name="Hume D.A."/>
            <person name="Kai C."/>
            <person name="Sasaki D."/>
            <person name="Tomaru Y."/>
            <person name="Fukuda S."/>
            <person name="Kanamori-Katayama M."/>
            <person name="Suzuki M."/>
            <person name="Aoki J."/>
            <person name="Arakawa T."/>
            <person name="Iida J."/>
            <person name="Imamura K."/>
            <person name="Itoh M."/>
            <person name="Kato T."/>
            <person name="Kawaji H."/>
            <person name="Kawagashira N."/>
            <person name="Kawashima T."/>
            <person name="Kojima M."/>
            <person name="Kondo S."/>
            <person name="Konno H."/>
            <person name="Nakano K."/>
            <person name="Ninomiya N."/>
            <person name="Nishio T."/>
            <person name="Okada M."/>
            <person name="Plessy C."/>
            <person name="Shibata K."/>
            <person name="Shiraki T."/>
            <person name="Suzuki S."/>
            <person name="Tagami M."/>
            <person name="Waki K."/>
            <person name="Watahiki A."/>
            <person name="Okamura-Oho Y."/>
            <person name="Suzuki H."/>
            <person name="Kawai J."/>
            <person name="Hayashizaki Y."/>
        </authorList>
    </citation>
    <scope>NUCLEOTIDE SEQUENCE [LARGE SCALE MRNA]</scope>
    <source>
        <strain>C57BL/6J</strain>
    </source>
</reference>
<evidence type="ECO:0000250" key="1">
    <source>
        <dbReference type="UniProtKB" id="Q6PL24"/>
    </source>
</evidence>
<evidence type="ECO:0000255" key="2">
    <source>
        <dbReference type="PROSITE-ProRule" id="PRU00096"/>
    </source>
</evidence>
<evidence type="ECO:0000256" key="3">
    <source>
        <dbReference type="SAM" id="MobiDB-lite"/>
    </source>
</evidence>
<accession>Q3UHI4</accession>
<dbReference type="EMBL" id="AK147378">
    <property type="protein sequence ID" value="BAE27873.1"/>
    <property type="molecule type" value="mRNA"/>
</dbReference>
<dbReference type="CCDS" id="CCDS26072.1"/>
<dbReference type="RefSeq" id="NP_001028647.1">
    <property type="nucleotide sequence ID" value="NM_001033475.3"/>
</dbReference>
<dbReference type="SMR" id="Q3UHI4"/>
<dbReference type="BioGRID" id="238442">
    <property type="interactions" value="2"/>
</dbReference>
<dbReference type="FunCoup" id="Q3UHI4">
    <property type="interactions" value="68"/>
</dbReference>
<dbReference type="STRING" id="10090.ENSMUSP00000043742"/>
<dbReference type="iPTMnet" id="Q3UHI4"/>
<dbReference type="PhosphoSitePlus" id="Q3UHI4"/>
<dbReference type="PaxDb" id="10090-ENSMUSP00000043742"/>
<dbReference type="ProteomicsDB" id="262836"/>
<dbReference type="Pumba" id="Q3UHI4"/>
<dbReference type="Antibodypedia" id="27">
    <property type="antibodies" value="91 antibodies from 18 providers"/>
</dbReference>
<dbReference type="Ensembl" id="ENSMUST00000037418.7">
    <property type="protein sequence ID" value="ENSMUSP00000043742.6"/>
    <property type="gene ID" value="ENSMUSG00000034111.7"/>
</dbReference>
<dbReference type="GeneID" id="382620"/>
<dbReference type="KEGG" id="mmu:382620"/>
<dbReference type="UCSC" id="uc007oin.1">
    <property type="organism name" value="mouse"/>
</dbReference>
<dbReference type="AGR" id="MGI:1923480"/>
<dbReference type="CTD" id="283578"/>
<dbReference type="MGI" id="MGI:1923480">
    <property type="gene designation" value="Tmed8"/>
</dbReference>
<dbReference type="VEuPathDB" id="HostDB:ENSMUSG00000034111"/>
<dbReference type="eggNOG" id="KOG3878">
    <property type="taxonomic scope" value="Eukaryota"/>
</dbReference>
<dbReference type="GeneTree" id="ENSGT00530000063651"/>
<dbReference type="HOGENOM" id="CLU_053155_0_0_1"/>
<dbReference type="InParanoid" id="Q3UHI4"/>
<dbReference type="OMA" id="KRLFWEF"/>
<dbReference type="OrthoDB" id="5839451at2759"/>
<dbReference type="PhylomeDB" id="Q3UHI4"/>
<dbReference type="TreeFam" id="TF321667"/>
<dbReference type="BioGRID-ORCS" id="382620">
    <property type="hits" value="2 hits in 77 CRISPR screens"/>
</dbReference>
<dbReference type="ChiTaRS" id="Tmed8">
    <property type="organism name" value="mouse"/>
</dbReference>
<dbReference type="PRO" id="PR:Q3UHI4"/>
<dbReference type="Proteomes" id="UP000000589">
    <property type="component" value="Chromosome 12"/>
</dbReference>
<dbReference type="RNAct" id="Q3UHI4">
    <property type="molecule type" value="protein"/>
</dbReference>
<dbReference type="Bgee" id="ENSMUSG00000034111">
    <property type="expression patterns" value="Expressed in utricle of membranous labyrinth and 216 other cell types or tissues"/>
</dbReference>
<dbReference type="Gene3D" id="2.60.120.680">
    <property type="entry name" value="GOLD domain"/>
    <property type="match status" value="1"/>
</dbReference>
<dbReference type="InterPro" id="IPR009038">
    <property type="entry name" value="GOLD_dom"/>
</dbReference>
<dbReference type="InterPro" id="IPR036598">
    <property type="entry name" value="GOLD_dom_sf"/>
</dbReference>
<dbReference type="InterPro" id="IPR052269">
    <property type="entry name" value="Golgi-PI4KB_interaction"/>
</dbReference>
<dbReference type="PANTHER" id="PTHR22973">
    <property type="entry name" value="LD35087P"/>
    <property type="match status" value="1"/>
</dbReference>
<dbReference type="PANTHER" id="PTHR22973:SF3">
    <property type="entry name" value="PROTEIN TMED8"/>
    <property type="match status" value="1"/>
</dbReference>
<dbReference type="Pfam" id="PF13897">
    <property type="entry name" value="GOLD_2"/>
    <property type="match status" value="1"/>
</dbReference>
<dbReference type="SUPFAM" id="SSF101576">
    <property type="entry name" value="Supernatant protein factor (SPF), C-terminal domain"/>
    <property type="match status" value="1"/>
</dbReference>
<dbReference type="PROSITE" id="PS50866">
    <property type="entry name" value="GOLD"/>
    <property type="match status" value="1"/>
</dbReference>
<keyword id="KW-0007">Acetylation</keyword>
<keyword id="KW-1185">Reference proteome</keyword>
<organism>
    <name type="scientific">Mus musculus</name>
    <name type="common">Mouse</name>
    <dbReference type="NCBI Taxonomy" id="10090"/>
    <lineage>
        <taxon>Eukaryota</taxon>
        <taxon>Metazoa</taxon>
        <taxon>Chordata</taxon>
        <taxon>Craniata</taxon>
        <taxon>Vertebrata</taxon>
        <taxon>Euteleostomi</taxon>
        <taxon>Mammalia</taxon>
        <taxon>Eutheria</taxon>
        <taxon>Euarchontoglires</taxon>
        <taxon>Glires</taxon>
        <taxon>Rodentia</taxon>
        <taxon>Myomorpha</taxon>
        <taxon>Muroidea</taxon>
        <taxon>Muridae</taxon>
        <taxon>Murinae</taxon>
        <taxon>Mus</taxon>
        <taxon>Mus</taxon>
    </lineage>
</organism>
<gene>
    <name type="primary">Tmed8</name>
</gene>
<name>TMED8_MOUSE</name>